<dbReference type="EC" id="6.1.1.6" evidence="1"/>
<dbReference type="EMBL" id="CP000653">
    <property type="protein sequence ID" value="ABP61972.1"/>
    <property type="molecule type" value="Genomic_DNA"/>
</dbReference>
<dbReference type="RefSeq" id="WP_015960300.1">
    <property type="nucleotide sequence ID" value="NC_009436.1"/>
</dbReference>
<dbReference type="SMR" id="A4WE42"/>
<dbReference type="STRING" id="399742.Ent638_3308"/>
<dbReference type="KEGG" id="ent:Ent638_3308"/>
<dbReference type="eggNOG" id="COG1190">
    <property type="taxonomic scope" value="Bacteria"/>
</dbReference>
<dbReference type="HOGENOM" id="CLU_008255_6_0_6"/>
<dbReference type="OrthoDB" id="9801152at2"/>
<dbReference type="Proteomes" id="UP000000230">
    <property type="component" value="Chromosome"/>
</dbReference>
<dbReference type="GO" id="GO:0005829">
    <property type="term" value="C:cytosol"/>
    <property type="evidence" value="ECO:0007669"/>
    <property type="project" value="TreeGrafter"/>
</dbReference>
<dbReference type="GO" id="GO:0005524">
    <property type="term" value="F:ATP binding"/>
    <property type="evidence" value="ECO:0007669"/>
    <property type="project" value="UniProtKB-UniRule"/>
</dbReference>
<dbReference type="GO" id="GO:0004824">
    <property type="term" value="F:lysine-tRNA ligase activity"/>
    <property type="evidence" value="ECO:0007669"/>
    <property type="project" value="UniProtKB-UniRule"/>
</dbReference>
<dbReference type="GO" id="GO:0000287">
    <property type="term" value="F:magnesium ion binding"/>
    <property type="evidence" value="ECO:0007669"/>
    <property type="project" value="UniProtKB-UniRule"/>
</dbReference>
<dbReference type="GO" id="GO:0000049">
    <property type="term" value="F:tRNA binding"/>
    <property type="evidence" value="ECO:0007669"/>
    <property type="project" value="TreeGrafter"/>
</dbReference>
<dbReference type="GO" id="GO:0006430">
    <property type="term" value="P:lysyl-tRNA aminoacylation"/>
    <property type="evidence" value="ECO:0007669"/>
    <property type="project" value="UniProtKB-UniRule"/>
</dbReference>
<dbReference type="CDD" id="cd00775">
    <property type="entry name" value="LysRS_core"/>
    <property type="match status" value="1"/>
</dbReference>
<dbReference type="CDD" id="cd04322">
    <property type="entry name" value="LysRS_N"/>
    <property type="match status" value="1"/>
</dbReference>
<dbReference type="FunFam" id="2.40.50.140:FF:000024">
    <property type="entry name" value="Lysine--tRNA ligase"/>
    <property type="match status" value="1"/>
</dbReference>
<dbReference type="FunFam" id="3.30.930.10:FF:000001">
    <property type="entry name" value="Lysine--tRNA ligase"/>
    <property type="match status" value="1"/>
</dbReference>
<dbReference type="Gene3D" id="3.30.930.10">
    <property type="entry name" value="Bira Bifunctional Protein, Domain 2"/>
    <property type="match status" value="1"/>
</dbReference>
<dbReference type="Gene3D" id="2.40.50.140">
    <property type="entry name" value="Nucleic acid-binding proteins"/>
    <property type="match status" value="1"/>
</dbReference>
<dbReference type="HAMAP" id="MF_00252">
    <property type="entry name" value="Lys_tRNA_synth_class2"/>
    <property type="match status" value="1"/>
</dbReference>
<dbReference type="InterPro" id="IPR004364">
    <property type="entry name" value="Aa-tRNA-synt_II"/>
</dbReference>
<dbReference type="InterPro" id="IPR006195">
    <property type="entry name" value="aa-tRNA-synth_II"/>
</dbReference>
<dbReference type="InterPro" id="IPR045864">
    <property type="entry name" value="aa-tRNA-synth_II/BPL/LPL"/>
</dbReference>
<dbReference type="InterPro" id="IPR002313">
    <property type="entry name" value="Lys-tRNA-ligase_II"/>
</dbReference>
<dbReference type="InterPro" id="IPR034762">
    <property type="entry name" value="Lys-tRNA-ligase_II_bac/euk"/>
</dbReference>
<dbReference type="InterPro" id="IPR044136">
    <property type="entry name" value="Lys-tRNA-ligase_II_N"/>
</dbReference>
<dbReference type="InterPro" id="IPR018149">
    <property type="entry name" value="Lys-tRNA-synth_II_C"/>
</dbReference>
<dbReference type="InterPro" id="IPR012340">
    <property type="entry name" value="NA-bd_OB-fold"/>
</dbReference>
<dbReference type="InterPro" id="IPR004365">
    <property type="entry name" value="NA-bd_OB_tRNA"/>
</dbReference>
<dbReference type="NCBIfam" id="TIGR00499">
    <property type="entry name" value="lysS_bact"/>
    <property type="match status" value="1"/>
</dbReference>
<dbReference type="NCBIfam" id="NF001756">
    <property type="entry name" value="PRK00484.1"/>
    <property type="match status" value="1"/>
</dbReference>
<dbReference type="NCBIfam" id="NF009101">
    <property type="entry name" value="PRK12445.1"/>
    <property type="match status" value="1"/>
</dbReference>
<dbReference type="PANTHER" id="PTHR42918:SF15">
    <property type="entry name" value="LYSINE--TRNA LIGASE, CHLOROPLASTIC_MITOCHONDRIAL"/>
    <property type="match status" value="1"/>
</dbReference>
<dbReference type="PANTHER" id="PTHR42918">
    <property type="entry name" value="LYSYL-TRNA SYNTHETASE"/>
    <property type="match status" value="1"/>
</dbReference>
<dbReference type="Pfam" id="PF00152">
    <property type="entry name" value="tRNA-synt_2"/>
    <property type="match status" value="1"/>
</dbReference>
<dbReference type="Pfam" id="PF01336">
    <property type="entry name" value="tRNA_anti-codon"/>
    <property type="match status" value="1"/>
</dbReference>
<dbReference type="PIRSF" id="PIRSF039101">
    <property type="entry name" value="LysRS2"/>
    <property type="match status" value="1"/>
</dbReference>
<dbReference type="PRINTS" id="PR00982">
    <property type="entry name" value="TRNASYNTHLYS"/>
</dbReference>
<dbReference type="SUPFAM" id="SSF55681">
    <property type="entry name" value="Class II aaRS and biotin synthetases"/>
    <property type="match status" value="1"/>
</dbReference>
<dbReference type="SUPFAM" id="SSF50249">
    <property type="entry name" value="Nucleic acid-binding proteins"/>
    <property type="match status" value="1"/>
</dbReference>
<dbReference type="PROSITE" id="PS50862">
    <property type="entry name" value="AA_TRNA_LIGASE_II"/>
    <property type="match status" value="1"/>
</dbReference>
<protein>
    <recommendedName>
        <fullName evidence="1">Lysine--tRNA ligase</fullName>
        <ecNumber evidence="1">6.1.1.6</ecNumber>
    </recommendedName>
    <alternativeName>
        <fullName evidence="1">Lysyl-tRNA synthetase</fullName>
        <shortName evidence="1">LysRS</shortName>
    </alternativeName>
</protein>
<reference key="1">
    <citation type="journal article" date="2010" name="PLoS Genet.">
        <title>Genome sequence of the plant growth promoting endophytic bacterium Enterobacter sp. 638.</title>
        <authorList>
            <person name="Taghavi S."/>
            <person name="van der Lelie D."/>
            <person name="Hoffman A."/>
            <person name="Zhang Y.B."/>
            <person name="Walla M.D."/>
            <person name="Vangronsveld J."/>
            <person name="Newman L."/>
            <person name="Monchy S."/>
        </authorList>
    </citation>
    <scope>NUCLEOTIDE SEQUENCE [LARGE SCALE GENOMIC DNA]</scope>
    <source>
        <strain>638</strain>
    </source>
</reference>
<organism>
    <name type="scientific">Enterobacter sp. (strain 638)</name>
    <dbReference type="NCBI Taxonomy" id="399742"/>
    <lineage>
        <taxon>Bacteria</taxon>
        <taxon>Pseudomonadati</taxon>
        <taxon>Pseudomonadota</taxon>
        <taxon>Gammaproteobacteria</taxon>
        <taxon>Enterobacterales</taxon>
        <taxon>Enterobacteriaceae</taxon>
        <taxon>Enterobacter</taxon>
    </lineage>
</organism>
<evidence type="ECO:0000255" key="1">
    <source>
        <dbReference type="HAMAP-Rule" id="MF_00252"/>
    </source>
</evidence>
<keyword id="KW-0030">Aminoacyl-tRNA synthetase</keyword>
<keyword id="KW-0067">ATP-binding</keyword>
<keyword id="KW-0963">Cytoplasm</keyword>
<keyword id="KW-0436">Ligase</keyword>
<keyword id="KW-0460">Magnesium</keyword>
<keyword id="KW-0479">Metal-binding</keyword>
<keyword id="KW-0547">Nucleotide-binding</keyword>
<keyword id="KW-0648">Protein biosynthesis</keyword>
<proteinExistence type="inferred from homology"/>
<name>SYK_ENT38</name>
<sequence>MSEQQAQGTDAVVDLNNELKTRREKLAALREQGIPFPNDFRRDHTSDQLHADFDAKENEELEALNVEVSVAGRMMTRRIMGKASFVTLQDVGGRIQLYVSRDDLPEGIYNEQFKKWDLGDILGAKGKLFKTKTGELSIHCTELRLLTKALRPLPDKFHGLQDQEARYRQRYLDLISNDESRKTFKIRSQIMAGIRQFMVGRDFMEVETPMMQVIPGGASARPFVTHHNALDLDMYLRIAPELYLKRLVVGGFERVFEINRNFRNEGISVRHNPEFTMMELYMAYADYKDLIELTESLFRTLAQNILGTTEVPYGDEVFDFGKPFVKLTMREAIKKYRPETEMADLDNYDSAKAIAESIGIKVEKSWGQGRIVTEIFEEVAEAHLIQPTFITEYPAEVSPLARRNDENPEITDRFEFFIGGREIGNGFSELNDAQDQAQRFQDQVDAKAAGDDEAMFFDEDYVTALEHGLPPTAGLGIGIDRMVMLFTNSHTIRDVILFPAMRPVK</sequence>
<accession>A4WE42</accession>
<gene>
    <name evidence="1" type="primary">lysS</name>
    <name type="ordered locus">Ent638_3308</name>
</gene>
<comment type="catalytic activity">
    <reaction evidence="1">
        <text>tRNA(Lys) + L-lysine + ATP = L-lysyl-tRNA(Lys) + AMP + diphosphate</text>
        <dbReference type="Rhea" id="RHEA:20792"/>
        <dbReference type="Rhea" id="RHEA-COMP:9696"/>
        <dbReference type="Rhea" id="RHEA-COMP:9697"/>
        <dbReference type="ChEBI" id="CHEBI:30616"/>
        <dbReference type="ChEBI" id="CHEBI:32551"/>
        <dbReference type="ChEBI" id="CHEBI:33019"/>
        <dbReference type="ChEBI" id="CHEBI:78442"/>
        <dbReference type="ChEBI" id="CHEBI:78529"/>
        <dbReference type="ChEBI" id="CHEBI:456215"/>
        <dbReference type="EC" id="6.1.1.6"/>
    </reaction>
</comment>
<comment type="cofactor">
    <cofactor evidence="1">
        <name>Mg(2+)</name>
        <dbReference type="ChEBI" id="CHEBI:18420"/>
    </cofactor>
    <text evidence="1">Binds 3 Mg(2+) ions per subunit.</text>
</comment>
<comment type="subunit">
    <text evidence="1">Homodimer.</text>
</comment>
<comment type="subcellular location">
    <subcellularLocation>
        <location evidence="1">Cytoplasm</location>
    </subcellularLocation>
</comment>
<comment type="similarity">
    <text evidence="1">Belongs to the class-II aminoacyl-tRNA synthetase family.</text>
</comment>
<feature type="chain" id="PRO_1000059040" description="Lysine--tRNA ligase">
    <location>
        <begin position="1"/>
        <end position="505"/>
    </location>
</feature>
<feature type="binding site" evidence="1">
    <location>
        <position position="415"/>
    </location>
    <ligand>
        <name>Mg(2+)</name>
        <dbReference type="ChEBI" id="CHEBI:18420"/>
        <label>1</label>
    </ligand>
</feature>
<feature type="binding site" evidence="1">
    <location>
        <position position="422"/>
    </location>
    <ligand>
        <name>Mg(2+)</name>
        <dbReference type="ChEBI" id="CHEBI:18420"/>
        <label>1</label>
    </ligand>
</feature>
<feature type="binding site" evidence="1">
    <location>
        <position position="422"/>
    </location>
    <ligand>
        <name>Mg(2+)</name>
        <dbReference type="ChEBI" id="CHEBI:18420"/>
        <label>2</label>
    </ligand>
</feature>